<proteinExistence type="inferred from homology"/>
<protein>
    <recommendedName>
        <fullName evidence="2">D-alanine--D-alanine ligase</fullName>
        <ecNumber evidence="2">6.3.2.4</ecNumber>
    </recommendedName>
    <alternativeName>
        <fullName evidence="2">D-Ala-D-Ala ligase</fullName>
    </alternativeName>
    <alternativeName>
        <fullName evidence="2">D-alanylalanine synthetase</fullName>
    </alternativeName>
</protein>
<name>DDL_MYCA1</name>
<accession>A0QJB2</accession>
<evidence type="ECO:0000250" key="1"/>
<evidence type="ECO:0000255" key="2">
    <source>
        <dbReference type="HAMAP-Rule" id="MF_00047"/>
    </source>
</evidence>
<sequence length="369" mass="38902">MNASQRVRVAVVFGGRSNEHAISCVSAGSILRNLDPRRFEVVAIGITPQGSWVLTDGDPAALAISDRQLPEVTSASGTELALPADPGRSGQLVSLPPGASEVLASVDVVFPVLHGPYGEDGTIQGLLELAGVPYVGAGVFASAAGMDKEFTKKLFAAEGLPIGDYAVLRPSQSTLSLQDRERLGLPVFVKPARGGSSIGVSRVSSWDELDAAVAAARDHDPKVIVEAAIAGRELECGVLEMPDGTVQASTVGEIRVAGVRGREDSFYDFATKYLDDTAELDVPAKVDDEIADAVRELAIRAFKAVDCQGLARVDFFLTETGPVLNEINTMPGFTTISMYPRMWAASGVDYPSLLATMVETALTRGVGLR</sequence>
<gene>
    <name evidence="2" type="primary">ddl</name>
    <name type="ordered locus">MAV_3830</name>
</gene>
<dbReference type="EC" id="6.3.2.4" evidence="2"/>
<dbReference type="EMBL" id="CP000479">
    <property type="protein sequence ID" value="ABK66362.1"/>
    <property type="molecule type" value="Genomic_DNA"/>
</dbReference>
<dbReference type="RefSeq" id="WP_011725704.1">
    <property type="nucleotide sequence ID" value="NC_008595.1"/>
</dbReference>
<dbReference type="SMR" id="A0QJB2"/>
<dbReference type="KEGG" id="mav:MAV_3830"/>
<dbReference type="HOGENOM" id="CLU_039268_0_1_11"/>
<dbReference type="UniPathway" id="UPA00219"/>
<dbReference type="Proteomes" id="UP000001574">
    <property type="component" value="Chromosome"/>
</dbReference>
<dbReference type="GO" id="GO:0005829">
    <property type="term" value="C:cytosol"/>
    <property type="evidence" value="ECO:0007669"/>
    <property type="project" value="TreeGrafter"/>
</dbReference>
<dbReference type="GO" id="GO:0005524">
    <property type="term" value="F:ATP binding"/>
    <property type="evidence" value="ECO:0007669"/>
    <property type="project" value="UniProtKB-KW"/>
</dbReference>
<dbReference type="GO" id="GO:0008716">
    <property type="term" value="F:D-alanine-D-alanine ligase activity"/>
    <property type="evidence" value="ECO:0007669"/>
    <property type="project" value="UniProtKB-UniRule"/>
</dbReference>
<dbReference type="GO" id="GO:0046872">
    <property type="term" value="F:metal ion binding"/>
    <property type="evidence" value="ECO:0007669"/>
    <property type="project" value="UniProtKB-KW"/>
</dbReference>
<dbReference type="GO" id="GO:0071555">
    <property type="term" value="P:cell wall organization"/>
    <property type="evidence" value="ECO:0007669"/>
    <property type="project" value="UniProtKB-KW"/>
</dbReference>
<dbReference type="GO" id="GO:0009252">
    <property type="term" value="P:peptidoglycan biosynthetic process"/>
    <property type="evidence" value="ECO:0007669"/>
    <property type="project" value="UniProtKB-UniRule"/>
</dbReference>
<dbReference type="GO" id="GO:0008360">
    <property type="term" value="P:regulation of cell shape"/>
    <property type="evidence" value="ECO:0007669"/>
    <property type="project" value="UniProtKB-KW"/>
</dbReference>
<dbReference type="FunFam" id="3.30.470.20:FF:000008">
    <property type="entry name" value="D-alanine--D-alanine ligase"/>
    <property type="match status" value="1"/>
</dbReference>
<dbReference type="Gene3D" id="3.40.50.20">
    <property type="match status" value="1"/>
</dbReference>
<dbReference type="Gene3D" id="3.30.1490.20">
    <property type="entry name" value="ATP-grasp fold, A domain"/>
    <property type="match status" value="1"/>
</dbReference>
<dbReference type="Gene3D" id="3.30.470.20">
    <property type="entry name" value="ATP-grasp fold, B domain"/>
    <property type="match status" value="1"/>
</dbReference>
<dbReference type="HAMAP" id="MF_00047">
    <property type="entry name" value="Dala_Dala_lig"/>
    <property type="match status" value="1"/>
</dbReference>
<dbReference type="InterPro" id="IPR011761">
    <property type="entry name" value="ATP-grasp"/>
</dbReference>
<dbReference type="InterPro" id="IPR013815">
    <property type="entry name" value="ATP_grasp_subdomain_1"/>
</dbReference>
<dbReference type="InterPro" id="IPR000291">
    <property type="entry name" value="D-Ala_lig_Van_CS"/>
</dbReference>
<dbReference type="InterPro" id="IPR005905">
    <property type="entry name" value="D_ala_D_ala"/>
</dbReference>
<dbReference type="InterPro" id="IPR011095">
    <property type="entry name" value="Dala_Dala_lig_C"/>
</dbReference>
<dbReference type="InterPro" id="IPR011127">
    <property type="entry name" value="Dala_Dala_lig_N"/>
</dbReference>
<dbReference type="InterPro" id="IPR016185">
    <property type="entry name" value="PreATP-grasp_dom_sf"/>
</dbReference>
<dbReference type="NCBIfam" id="TIGR01205">
    <property type="entry name" value="D_ala_D_alaTIGR"/>
    <property type="match status" value="1"/>
</dbReference>
<dbReference type="NCBIfam" id="NF002378">
    <property type="entry name" value="PRK01372.1"/>
    <property type="match status" value="1"/>
</dbReference>
<dbReference type="NCBIfam" id="NF002528">
    <property type="entry name" value="PRK01966.1-4"/>
    <property type="match status" value="1"/>
</dbReference>
<dbReference type="PANTHER" id="PTHR23132">
    <property type="entry name" value="D-ALANINE--D-ALANINE LIGASE"/>
    <property type="match status" value="1"/>
</dbReference>
<dbReference type="PANTHER" id="PTHR23132:SF25">
    <property type="entry name" value="D-ALANINE--D-ALANINE LIGASE A"/>
    <property type="match status" value="1"/>
</dbReference>
<dbReference type="Pfam" id="PF07478">
    <property type="entry name" value="Dala_Dala_lig_C"/>
    <property type="match status" value="1"/>
</dbReference>
<dbReference type="Pfam" id="PF01820">
    <property type="entry name" value="Dala_Dala_lig_N"/>
    <property type="match status" value="1"/>
</dbReference>
<dbReference type="PIRSF" id="PIRSF039102">
    <property type="entry name" value="Ddl/VanB"/>
    <property type="match status" value="1"/>
</dbReference>
<dbReference type="SUPFAM" id="SSF56059">
    <property type="entry name" value="Glutathione synthetase ATP-binding domain-like"/>
    <property type="match status" value="1"/>
</dbReference>
<dbReference type="SUPFAM" id="SSF52440">
    <property type="entry name" value="PreATP-grasp domain"/>
    <property type="match status" value="1"/>
</dbReference>
<dbReference type="PROSITE" id="PS50975">
    <property type="entry name" value="ATP_GRASP"/>
    <property type="match status" value="1"/>
</dbReference>
<dbReference type="PROSITE" id="PS00843">
    <property type="entry name" value="DALA_DALA_LIGASE_1"/>
    <property type="match status" value="1"/>
</dbReference>
<dbReference type="PROSITE" id="PS00844">
    <property type="entry name" value="DALA_DALA_LIGASE_2"/>
    <property type="match status" value="1"/>
</dbReference>
<comment type="function">
    <text evidence="2">Cell wall formation.</text>
</comment>
<comment type="catalytic activity">
    <reaction evidence="2">
        <text>2 D-alanine + ATP = D-alanyl-D-alanine + ADP + phosphate + H(+)</text>
        <dbReference type="Rhea" id="RHEA:11224"/>
        <dbReference type="ChEBI" id="CHEBI:15378"/>
        <dbReference type="ChEBI" id="CHEBI:30616"/>
        <dbReference type="ChEBI" id="CHEBI:43474"/>
        <dbReference type="ChEBI" id="CHEBI:57416"/>
        <dbReference type="ChEBI" id="CHEBI:57822"/>
        <dbReference type="ChEBI" id="CHEBI:456216"/>
        <dbReference type="EC" id="6.3.2.4"/>
    </reaction>
</comment>
<comment type="cofactor">
    <cofactor evidence="1">
        <name>Mg(2+)</name>
        <dbReference type="ChEBI" id="CHEBI:18420"/>
    </cofactor>
    <cofactor evidence="1">
        <name>Mn(2+)</name>
        <dbReference type="ChEBI" id="CHEBI:29035"/>
    </cofactor>
    <text evidence="1">Binds 2 magnesium or manganese ions per subunit.</text>
</comment>
<comment type="pathway">
    <text evidence="2">Cell wall biogenesis; peptidoglycan biosynthesis.</text>
</comment>
<comment type="subcellular location">
    <subcellularLocation>
        <location evidence="2">Cytoplasm</location>
    </subcellularLocation>
</comment>
<comment type="similarity">
    <text evidence="2">Belongs to the D-alanine--D-alanine ligase family.</text>
</comment>
<reference key="1">
    <citation type="submission" date="2006-10" db="EMBL/GenBank/DDBJ databases">
        <authorList>
            <person name="Fleischmann R.D."/>
            <person name="Dodson R.J."/>
            <person name="Haft D.H."/>
            <person name="Merkel J.S."/>
            <person name="Nelson W.C."/>
            <person name="Fraser C.M."/>
        </authorList>
    </citation>
    <scope>NUCLEOTIDE SEQUENCE [LARGE SCALE GENOMIC DNA]</scope>
    <source>
        <strain>104</strain>
    </source>
</reference>
<keyword id="KW-0067">ATP-binding</keyword>
<keyword id="KW-0133">Cell shape</keyword>
<keyword id="KW-0961">Cell wall biogenesis/degradation</keyword>
<keyword id="KW-0963">Cytoplasm</keyword>
<keyword id="KW-0436">Ligase</keyword>
<keyword id="KW-0460">Magnesium</keyword>
<keyword id="KW-0464">Manganese</keyword>
<keyword id="KW-0479">Metal-binding</keyword>
<keyword id="KW-0547">Nucleotide-binding</keyword>
<keyword id="KW-0573">Peptidoglycan synthesis</keyword>
<feature type="chain" id="PRO_1000074777" description="D-alanine--D-alanine ligase">
    <location>
        <begin position="1"/>
        <end position="369"/>
    </location>
</feature>
<feature type="domain" description="ATP-grasp" evidence="2">
    <location>
        <begin position="152"/>
        <end position="359"/>
    </location>
</feature>
<feature type="binding site" evidence="2">
    <location>
        <begin position="180"/>
        <end position="235"/>
    </location>
    <ligand>
        <name>ATP</name>
        <dbReference type="ChEBI" id="CHEBI:30616"/>
    </ligand>
</feature>
<feature type="binding site" evidence="2">
    <location>
        <position position="314"/>
    </location>
    <ligand>
        <name>Mg(2+)</name>
        <dbReference type="ChEBI" id="CHEBI:18420"/>
        <label>1</label>
    </ligand>
</feature>
<feature type="binding site" evidence="2">
    <location>
        <position position="326"/>
    </location>
    <ligand>
        <name>Mg(2+)</name>
        <dbReference type="ChEBI" id="CHEBI:18420"/>
        <label>1</label>
    </ligand>
</feature>
<feature type="binding site" evidence="2">
    <location>
        <position position="326"/>
    </location>
    <ligand>
        <name>Mg(2+)</name>
        <dbReference type="ChEBI" id="CHEBI:18420"/>
        <label>2</label>
    </ligand>
</feature>
<feature type="binding site" evidence="2">
    <location>
        <position position="328"/>
    </location>
    <ligand>
        <name>Mg(2+)</name>
        <dbReference type="ChEBI" id="CHEBI:18420"/>
        <label>2</label>
    </ligand>
</feature>
<organism>
    <name type="scientific">Mycobacterium avium (strain 104)</name>
    <dbReference type="NCBI Taxonomy" id="243243"/>
    <lineage>
        <taxon>Bacteria</taxon>
        <taxon>Bacillati</taxon>
        <taxon>Actinomycetota</taxon>
        <taxon>Actinomycetes</taxon>
        <taxon>Mycobacteriales</taxon>
        <taxon>Mycobacteriaceae</taxon>
        <taxon>Mycobacterium</taxon>
        <taxon>Mycobacterium avium complex (MAC)</taxon>
    </lineage>
</organism>